<reference key="1">
    <citation type="journal article" date="1998" name="Proc. R. Soc. B">
        <title>Analyses of mitochondrial genomes strongly support a hippopotamus-whale clade.</title>
        <authorList>
            <person name="Ursing B.M."/>
            <person name="Arnason U."/>
        </authorList>
    </citation>
    <scope>NUCLEOTIDE SEQUENCE [GENOMIC DNA]</scope>
</reference>
<geneLocation type="mitochondrion"/>
<sequence>MFIINTLMLVAPILLAMAFLTLVERKILGYMQLRKGPNIVGPYGLLQPFADAIKLFTKEPLRPSTSSVSMFIIAPILALTLALTMWIPLPMPYPLINMNLGVLFMLAMSSLAVYSILWSGWASNSKYALIGALRAVAQTISYEVTLAIILLSILLMNGSFTLSTLITTQEKLWLIFPSWPLAMMWFISTLAETNRAPFDLTEGESELVSGFNVEYAAGPFAMFFMAEYINIIMMNAFTTVLFLGTCYNPYLPELYTINFTIKTLLLTMSFLWIRASYPRFRYDQLMHLLWKSFLPLTLALCMWHVSLPIMTSSIPPQT</sequence>
<organism>
    <name type="scientific">Hippopotamus amphibius</name>
    <name type="common">Hippopotamus</name>
    <dbReference type="NCBI Taxonomy" id="9833"/>
    <lineage>
        <taxon>Eukaryota</taxon>
        <taxon>Metazoa</taxon>
        <taxon>Chordata</taxon>
        <taxon>Craniata</taxon>
        <taxon>Vertebrata</taxon>
        <taxon>Euteleostomi</taxon>
        <taxon>Mammalia</taxon>
        <taxon>Eutheria</taxon>
        <taxon>Laurasiatheria</taxon>
        <taxon>Artiodactyla</taxon>
        <taxon>Whippomorpha</taxon>
        <taxon>Ancodonta</taxon>
        <taxon>Hippopotamidae</taxon>
        <taxon>Hippopotamus</taxon>
    </lineage>
</organism>
<comment type="function">
    <text evidence="1">Core subunit of the mitochondrial membrane respiratory chain NADH dehydrogenase (Complex I) which catalyzes electron transfer from NADH through the respiratory chain, using ubiquinone as an electron acceptor. Essential for the catalytic activity and assembly of complex I.</text>
</comment>
<comment type="catalytic activity">
    <reaction evidence="1">
        <text>a ubiquinone + NADH + 5 H(+)(in) = a ubiquinol + NAD(+) + 4 H(+)(out)</text>
        <dbReference type="Rhea" id="RHEA:29091"/>
        <dbReference type="Rhea" id="RHEA-COMP:9565"/>
        <dbReference type="Rhea" id="RHEA-COMP:9566"/>
        <dbReference type="ChEBI" id="CHEBI:15378"/>
        <dbReference type="ChEBI" id="CHEBI:16389"/>
        <dbReference type="ChEBI" id="CHEBI:17976"/>
        <dbReference type="ChEBI" id="CHEBI:57540"/>
        <dbReference type="ChEBI" id="CHEBI:57945"/>
        <dbReference type="EC" id="7.1.1.2"/>
    </reaction>
</comment>
<comment type="subunit">
    <text evidence="2">Core subunit of respiratory chain NADH dehydrogenase (Complex I) which is composed of 45 different subunits.</text>
</comment>
<comment type="subcellular location">
    <subcellularLocation>
        <location evidence="2">Mitochondrion inner membrane</location>
        <topology evidence="3">Multi-pass membrane protein</topology>
    </subcellularLocation>
</comment>
<comment type="similarity">
    <text evidence="4">Belongs to the complex I subunit 1 family.</text>
</comment>
<proteinExistence type="inferred from homology"/>
<accession>Q9ZZZ1</accession>
<dbReference type="EC" id="7.1.1.2" evidence="1"/>
<dbReference type="EMBL" id="AJ010957">
    <property type="protein sequence ID" value="CAA09428.1"/>
    <property type="molecule type" value="Genomic_DNA"/>
</dbReference>
<dbReference type="RefSeq" id="NP_008790.1">
    <property type="nucleotide sequence ID" value="NC_000889.1"/>
</dbReference>
<dbReference type="SMR" id="Q9ZZZ1"/>
<dbReference type="GeneID" id="808678"/>
<dbReference type="CTD" id="4535"/>
<dbReference type="GO" id="GO:0005743">
    <property type="term" value="C:mitochondrial inner membrane"/>
    <property type="evidence" value="ECO:0000250"/>
    <property type="project" value="UniProtKB"/>
</dbReference>
<dbReference type="GO" id="GO:0008137">
    <property type="term" value="F:NADH dehydrogenase (ubiquinone) activity"/>
    <property type="evidence" value="ECO:0000250"/>
    <property type="project" value="UniProtKB"/>
</dbReference>
<dbReference type="GO" id="GO:0006120">
    <property type="term" value="P:mitochondrial electron transport, NADH to ubiquinone"/>
    <property type="evidence" value="ECO:0000250"/>
    <property type="project" value="UniProtKB"/>
</dbReference>
<dbReference type="GO" id="GO:0032981">
    <property type="term" value="P:mitochondrial respiratory chain complex I assembly"/>
    <property type="evidence" value="ECO:0000250"/>
    <property type="project" value="UniProtKB"/>
</dbReference>
<dbReference type="HAMAP" id="MF_01350">
    <property type="entry name" value="NDH1_NuoH"/>
    <property type="match status" value="1"/>
</dbReference>
<dbReference type="InterPro" id="IPR001694">
    <property type="entry name" value="NADH_UbQ_OxRdtase_su1/FPO"/>
</dbReference>
<dbReference type="InterPro" id="IPR018086">
    <property type="entry name" value="NADH_UbQ_OxRdtase_su1_CS"/>
</dbReference>
<dbReference type="PANTHER" id="PTHR11432">
    <property type="entry name" value="NADH DEHYDROGENASE SUBUNIT 1"/>
    <property type="match status" value="1"/>
</dbReference>
<dbReference type="PANTHER" id="PTHR11432:SF3">
    <property type="entry name" value="NADH-UBIQUINONE OXIDOREDUCTASE CHAIN 1"/>
    <property type="match status" value="1"/>
</dbReference>
<dbReference type="Pfam" id="PF00146">
    <property type="entry name" value="NADHdh"/>
    <property type="match status" value="1"/>
</dbReference>
<dbReference type="PROSITE" id="PS00667">
    <property type="entry name" value="COMPLEX1_ND1_1"/>
    <property type="match status" value="1"/>
</dbReference>
<dbReference type="PROSITE" id="PS00668">
    <property type="entry name" value="COMPLEX1_ND1_2"/>
    <property type="match status" value="1"/>
</dbReference>
<feature type="chain" id="PRO_0000117410" description="NADH-ubiquinone oxidoreductase chain 1">
    <location>
        <begin position="1"/>
        <end position="318"/>
    </location>
</feature>
<feature type="transmembrane region" description="Helical" evidence="3">
    <location>
        <begin position="2"/>
        <end position="22"/>
    </location>
</feature>
<feature type="transmembrane region" description="Helical" evidence="3">
    <location>
        <begin position="70"/>
        <end position="90"/>
    </location>
</feature>
<feature type="transmembrane region" description="Helical" evidence="3">
    <location>
        <begin position="100"/>
        <end position="120"/>
    </location>
</feature>
<feature type="transmembrane region" description="Helical" evidence="3">
    <location>
        <begin position="146"/>
        <end position="166"/>
    </location>
</feature>
<feature type="transmembrane region" description="Helical" evidence="3">
    <location>
        <begin position="172"/>
        <end position="192"/>
    </location>
</feature>
<feature type="transmembrane region" description="Helical" evidence="3">
    <location>
        <begin position="223"/>
        <end position="243"/>
    </location>
</feature>
<feature type="transmembrane region" description="Helical" evidence="3">
    <location>
        <begin position="253"/>
        <end position="273"/>
    </location>
</feature>
<feature type="transmembrane region" description="Helical" evidence="3">
    <location>
        <begin position="294"/>
        <end position="314"/>
    </location>
</feature>
<name>NU1M_HIPAM</name>
<evidence type="ECO:0000250" key="1">
    <source>
        <dbReference type="UniProtKB" id="P03886"/>
    </source>
</evidence>
<evidence type="ECO:0000250" key="2">
    <source>
        <dbReference type="UniProtKB" id="P03887"/>
    </source>
</evidence>
<evidence type="ECO:0000255" key="3"/>
<evidence type="ECO:0000305" key="4"/>
<protein>
    <recommendedName>
        <fullName>NADH-ubiquinone oxidoreductase chain 1</fullName>
        <ecNumber evidence="1">7.1.1.2</ecNumber>
    </recommendedName>
    <alternativeName>
        <fullName>NADH dehydrogenase subunit 1</fullName>
    </alternativeName>
</protein>
<keyword id="KW-0249">Electron transport</keyword>
<keyword id="KW-0472">Membrane</keyword>
<keyword id="KW-0496">Mitochondrion</keyword>
<keyword id="KW-0999">Mitochondrion inner membrane</keyword>
<keyword id="KW-0520">NAD</keyword>
<keyword id="KW-0679">Respiratory chain</keyword>
<keyword id="KW-1278">Translocase</keyword>
<keyword id="KW-0812">Transmembrane</keyword>
<keyword id="KW-1133">Transmembrane helix</keyword>
<keyword id="KW-0813">Transport</keyword>
<keyword id="KW-0830">Ubiquinone</keyword>
<gene>
    <name type="primary">MT-ND1</name>
    <name type="synonym">MTND1</name>
    <name type="synonym">NADH1</name>
    <name type="synonym">ND1</name>
</gene>